<name>MT2_HUMAN</name>
<dbReference type="EMBL" id="J00271">
    <property type="protein sequence ID" value="AAA59583.1"/>
    <property type="molecule type" value="Genomic_DNA"/>
</dbReference>
<dbReference type="EMBL" id="V00594">
    <property type="protein sequence ID" value="CAA23841.1"/>
    <property type="molecule type" value="mRNA"/>
</dbReference>
<dbReference type="EMBL" id="M26637">
    <property type="protein sequence ID" value="AAA59584.1"/>
    <property type="status" value="ALT_SEQ"/>
    <property type="molecule type" value="mRNA"/>
</dbReference>
<dbReference type="EMBL" id="S52379">
    <property type="protein sequence ID" value="AAB24908.1"/>
    <property type="molecule type" value="mRNA"/>
</dbReference>
<dbReference type="EMBL" id="X97260">
    <property type="protein sequence ID" value="CAA65915.1"/>
    <property type="molecule type" value="mRNA"/>
</dbReference>
<dbReference type="EMBL" id="BT007315">
    <property type="protein sequence ID" value="AAP35979.1"/>
    <property type="molecule type" value="mRNA"/>
</dbReference>
<dbReference type="EMBL" id="DQ370420">
    <property type="protein sequence ID" value="ABC79300.1"/>
    <property type="molecule type" value="Genomic_DNA"/>
</dbReference>
<dbReference type="EMBL" id="BC007034">
    <property type="protein sequence ID" value="AAH07034.1"/>
    <property type="molecule type" value="mRNA"/>
</dbReference>
<dbReference type="EMBL" id="BC070289">
    <property type="protein sequence ID" value="AAH70289.1"/>
    <property type="molecule type" value="mRNA"/>
</dbReference>
<dbReference type="CCDS" id="CCDS10763.1"/>
<dbReference type="PIR" id="A03271">
    <property type="entry name" value="SMHU2"/>
</dbReference>
<dbReference type="PIR" id="I63131">
    <property type="entry name" value="I63131"/>
</dbReference>
<dbReference type="RefSeq" id="NP_005944.1">
    <property type="nucleotide sequence ID" value="NM_005953.5"/>
</dbReference>
<dbReference type="PDB" id="1MHU">
    <property type="method" value="NMR"/>
    <property type="chains" value="A=31-61"/>
</dbReference>
<dbReference type="PDB" id="2MHU">
    <property type="method" value="NMR"/>
    <property type="chains" value="A=1-30"/>
</dbReference>
<dbReference type="PDBsum" id="1MHU"/>
<dbReference type="PDBsum" id="2MHU"/>
<dbReference type="BMRB" id="P02795"/>
<dbReference type="SMR" id="P02795"/>
<dbReference type="BioGRID" id="110608">
    <property type="interactions" value="39"/>
</dbReference>
<dbReference type="DIP" id="DIP-35232N"/>
<dbReference type="FunCoup" id="P02795">
    <property type="interactions" value="51"/>
</dbReference>
<dbReference type="IntAct" id="P02795">
    <property type="interactions" value="42"/>
</dbReference>
<dbReference type="MINT" id="P02795"/>
<dbReference type="STRING" id="9606.ENSP00000245185"/>
<dbReference type="BindingDB" id="P02795"/>
<dbReference type="DrugBank" id="DB00958">
    <property type="generic name" value="Carboplatin"/>
</dbReference>
<dbReference type="DrugBank" id="DB00515">
    <property type="generic name" value="Cisplatin"/>
</dbReference>
<dbReference type="DrugBank" id="DB09130">
    <property type="generic name" value="Copper"/>
</dbReference>
<dbReference type="DrugBank" id="DB00526">
    <property type="generic name" value="Oxaliplatin"/>
</dbReference>
<dbReference type="DrugBank" id="DB12965">
    <property type="generic name" value="Silver"/>
</dbReference>
<dbReference type="DrugBank" id="DB01593">
    <property type="generic name" value="Zinc"/>
</dbReference>
<dbReference type="DrugBank" id="DB14487">
    <property type="generic name" value="Zinc acetate"/>
</dbReference>
<dbReference type="DrugBank" id="DB14533">
    <property type="generic name" value="Zinc chloride"/>
</dbReference>
<dbReference type="DrugBank" id="DB14548">
    <property type="generic name" value="Zinc sulfate, unspecified form"/>
</dbReference>
<dbReference type="GlyGen" id="P02795">
    <property type="glycosylation" value="2 sites, 2 N-linked glycans (1 site)"/>
</dbReference>
<dbReference type="iPTMnet" id="P02795"/>
<dbReference type="MetOSite" id="P02795"/>
<dbReference type="PhosphoSitePlus" id="P02795"/>
<dbReference type="BioMuta" id="MT2A"/>
<dbReference type="jPOST" id="P02795"/>
<dbReference type="MassIVE" id="P02795"/>
<dbReference type="PaxDb" id="9606-ENSP00000245185"/>
<dbReference type="PeptideAtlas" id="P02795"/>
<dbReference type="ProteomicsDB" id="51601"/>
<dbReference type="TopDownProteomics" id="P02795"/>
<dbReference type="Antibodypedia" id="58432">
    <property type="antibodies" value="132 antibodies from 19 providers"/>
</dbReference>
<dbReference type="DNASU" id="4502"/>
<dbReference type="Ensembl" id="ENST00000245185.6">
    <property type="protein sequence ID" value="ENSP00000245185.5"/>
    <property type="gene ID" value="ENSG00000125148.7"/>
</dbReference>
<dbReference type="GeneID" id="4502"/>
<dbReference type="KEGG" id="hsa:4502"/>
<dbReference type="MANE-Select" id="ENST00000245185.6">
    <property type="protein sequence ID" value="ENSP00000245185.5"/>
    <property type="RefSeq nucleotide sequence ID" value="NM_005953.5"/>
    <property type="RefSeq protein sequence ID" value="NP_005944.1"/>
</dbReference>
<dbReference type="UCSC" id="uc002ejh.4">
    <property type="organism name" value="human"/>
</dbReference>
<dbReference type="AGR" id="HGNC:7406"/>
<dbReference type="CTD" id="4502"/>
<dbReference type="DisGeNET" id="4502"/>
<dbReference type="GeneCards" id="MT2A"/>
<dbReference type="HGNC" id="HGNC:7406">
    <property type="gene designation" value="MT2A"/>
</dbReference>
<dbReference type="HPA" id="ENSG00000125148">
    <property type="expression patterns" value="Tissue enhanced (liver)"/>
</dbReference>
<dbReference type="MIM" id="156360">
    <property type="type" value="gene"/>
</dbReference>
<dbReference type="neXtProt" id="NX_P02795"/>
<dbReference type="OpenTargets" id="ENSG00000125148"/>
<dbReference type="PharmGKB" id="PA31214"/>
<dbReference type="VEuPathDB" id="HostDB:ENSG00000125148"/>
<dbReference type="eggNOG" id="KOG4738">
    <property type="taxonomic scope" value="Eukaryota"/>
</dbReference>
<dbReference type="GeneTree" id="ENSGT00950000182967"/>
<dbReference type="HOGENOM" id="CLU_171204_2_0_1"/>
<dbReference type="InParanoid" id="P02795"/>
<dbReference type="OMA" id="KECKCSS"/>
<dbReference type="PAN-GO" id="P02795">
    <property type="GO annotations" value="8 GO annotations based on evolutionary models"/>
</dbReference>
<dbReference type="PhylomeDB" id="P02795"/>
<dbReference type="TreeFam" id="TF336054"/>
<dbReference type="PathwayCommons" id="P02795"/>
<dbReference type="Reactome" id="R-HSA-5661231">
    <property type="pathway name" value="Metallothioneins bind metals"/>
</dbReference>
<dbReference type="Reactome" id="R-HSA-877300">
    <property type="pathway name" value="Interferon gamma signaling"/>
</dbReference>
<dbReference type="SignaLink" id="P02795"/>
<dbReference type="BioGRID-ORCS" id="4502">
    <property type="hits" value="101 hits in 1120 CRISPR screens"/>
</dbReference>
<dbReference type="ChiTaRS" id="MT2A">
    <property type="organism name" value="human"/>
</dbReference>
<dbReference type="EvolutionaryTrace" id="P02795"/>
<dbReference type="GeneWiki" id="Metallothionein_2A"/>
<dbReference type="GenomeRNAi" id="4502"/>
<dbReference type="Pharos" id="P02795">
    <property type="development level" value="Tbio"/>
</dbReference>
<dbReference type="PRO" id="PR:P02795"/>
<dbReference type="Proteomes" id="UP000005640">
    <property type="component" value="Chromosome 16"/>
</dbReference>
<dbReference type="RNAct" id="P02795">
    <property type="molecule type" value="protein"/>
</dbReference>
<dbReference type="Bgee" id="ENSG00000125148">
    <property type="expression patterns" value="Expressed in pericardium and 206 other cell types or tissues"/>
</dbReference>
<dbReference type="ExpressionAtlas" id="P02795">
    <property type="expression patterns" value="baseline and differential"/>
</dbReference>
<dbReference type="GO" id="GO:0005737">
    <property type="term" value="C:cytoplasm"/>
    <property type="evidence" value="ECO:0000250"/>
    <property type="project" value="UniProtKB"/>
</dbReference>
<dbReference type="GO" id="GO:0005829">
    <property type="term" value="C:cytosol"/>
    <property type="evidence" value="ECO:0000304"/>
    <property type="project" value="Reactome"/>
</dbReference>
<dbReference type="GO" id="GO:0005634">
    <property type="term" value="C:nucleus"/>
    <property type="evidence" value="ECO:0000250"/>
    <property type="project" value="UniProtKB"/>
</dbReference>
<dbReference type="GO" id="GO:0046872">
    <property type="term" value="F:metal ion binding"/>
    <property type="evidence" value="ECO:0000318"/>
    <property type="project" value="GO_Central"/>
</dbReference>
<dbReference type="GO" id="GO:0008270">
    <property type="term" value="F:zinc ion binding"/>
    <property type="evidence" value="ECO:0000250"/>
    <property type="project" value="UniProtKB"/>
</dbReference>
<dbReference type="GO" id="GO:0071276">
    <property type="term" value="P:cellular response to cadmium ion"/>
    <property type="evidence" value="ECO:0000318"/>
    <property type="project" value="GO_Central"/>
</dbReference>
<dbReference type="GO" id="GO:0071280">
    <property type="term" value="P:cellular response to copper ion"/>
    <property type="evidence" value="ECO:0000318"/>
    <property type="project" value="GO_Central"/>
</dbReference>
<dbReference type="GO" id="GO:0036018">
    <property type="term" value="P:cellular response to erythropoietin"/>
    <property type="evidence" value="ECO:0000270"/>
    <property type="project" value="UniProtKB"/>
</dbReference>
<dbReference type="GO" id="GO:0036016">
    <property type="term" value="P:cellular response to interleukin-3"/>
    <property type="evidence" value="ECO:0000270"/>
    <property type="project" value="UniProtKB"/>
</dbReference>
<dbReference type="GO" id="GO:0071294">
    <property type="term" value="P:cellular response to zinc ion"/>
    <property type="evidence" value="ECO:0000270"/>
    <property type="project" value="UniProtKB"/>
</dbReference>
<dbReference type="GO" id="GO:0010273">
    <property type="term" value="P:detoxification of copper ion"/>
    <property type="evidence" value="ECO:0000318"/>
    <property type="project" value="GO_Central"/>
</dbReference>
<dbReference type="GO" id="GO:0006878">
    <property type="term" value="P:intracellular copper ion homeostasis"/>
    <property type="evidence" value="ECO:0000304"/>
    <property type="project" value="ProtInc"/>
</dbReference>
<dbReference type="GO" id="GO:0006882">
    <property type="term" value="P:intracellular zinc ion homeostasis"/>
    <property type="evidence" value="ECO:0000318"/>
    <property type="project" value="GO_Central"/>
</dbReference>
<dbReference type="GO" id="GO:0045926">
    <property type="term" value="P:negative regulation of growth"/>
    <property type="evidence" value="ECO:0000250"/>
    <property type="project" value="UniProtKB"/>
</dbReference>
<dbReference type="FunFam" id="4.10.10.10:FF:000001">
    <property type="entry name" value="Metallothionein"/>
    <property type="match status" value="1"/>
</dbReference>
<dbReference type="Gene3D" id="4.10.10.10">
    <property type="entry name" value="Metallothionein Isoform II"/>
    <property type="match status" value="1"/>
</dbReference>
<dbReference type="InterPro" id="IPR017854">
    <property type="entry name" value="Metalthion_dom_sf"/>
</dbReference>
<dbReference type="InterPro" id="IPR023587">
    <property type="entry name" value="Metalthion_dom_sf_vert"/>
</dbReference>
<dbReference type="InterPro" id="IPR000006">
    <property type="entry name" value="Metalthion_vert"/>
</dbReference>
<dbReference type="InterPro" id="IPR018064">
    <property type="entry name" value="Metalthion_vert_metal_BS"/>
</dbReference>
<dbReference type="PANTHER" id="PTHR23299">
    <property type="entry name" value="METALLOTHIONEIN"/>
    <property type="match status" value="1"/>
</dbReference>
<dbReference type="PANTHER" id="PTHR23299:SF22">
    <property type="entry name" value="METALLOTHIONEIN-1G"/>
    <property type="match status" value="1"/>
</dbReference>
<dbReference type="Pfam" id="PF00131">
    <property type="entry name" value="Metallothio"/>
    <property type="match status" value="1"/>
</dbReference>
<dbReference type="PRINTS" id="PR00860">
    <property type="entry name" value="MTVERTEBRATE"/>
</dbReference>
<dbReference type="SUPFAM" id="SSF57868">
    <property type="entry name" value="Metallothionein"/>
    <property type="match status" value="1"/>
</dbReference>
<dbReference type="PROSITE" id="PS00203">
    <property type="entry name" value="METALLOTHIONEIN_VRT"/>
    <property type="match status" value="1"/>
</dbReference>
<comment type="function">
    <text>Metallothioneins have a high content of cysteine residues that bind various heavy metals; these proteins are transcriptionally regulated by both heavy metals and glucocorticoids.</text>
</comment>
<comment type="subunit">
    <text evidence="1">Interacts with EOLA1.</text>
</comment>
<comment type="interaction">
    <interactant intactId="EBI-996616">
        <id>P02795</id>
    </interactant>
    <interactant intactId="EBI-1222467">
        <id>P02649</id>
        <label>APOE</label>
    </interactant>
    <organismsDiffer>false</organismsDiffer>
    <experiments>3</experiments>
</comment>
<comment type="interaction">
    <interactant intactId="EBI-996616">
        <id>P02795</id>
    </interactant>
    <interactant intactId="EBI-21553822">
        <id>Q96A83-2</id>
        <label>COL26A1</label>
    </interactant>
    <organismsDiffer>false</organismsDiffer>
    <experiments>3</experiments>
</comment>
<comment type="interaction">
    <interactant intactId="EBI-996616">
        <id>P02795</id>
    </interactant>
    <interactant intactId="EBI-395638">
        <id>O14645</id>
        <label>DNALI1</label>
    </interactant>
    <organismsDiffer>false</organismsDiffer>
    <experiments>3</experiments>
</comment>
<comment type="interaction">
    <interactant intactId="EBI-996616">
        <id>P02795</id>
    </interactant>
    <interactant intactId="EBI-996609">
        <id>Q8TE69</id>
        <label>EOLA1</label>
    </interactant>
    <organismsDiffer>false</organismsDiffer>
    <experiments>2</experiments>
</comment>
<comment type="interaction">
    <interactant intactId="EBI-996616">
        <id>P02795</id>
    </interactant>
    <interactant intactId="EBI-9641086">
        <id>P21333-2</id>
        <label>FLNA</label>
    </interactant>
    <organismsDiffer>false</organismsDiffer>
    <experiments>3</experiments>
</comment>
<comment type="interaction">
    <interactant intactId="EBI-996616">
        <id>P02795</id>
    </interactant>
    <interactant intactId="EBI-466029">
        <id>P42858</id>
        <label>HTT</label>
    </interactant>
    <organismsDiffer>false</organismsDiffer>
    <experiments>6</experiments>
</comment>
<comment type="interaction">
    <interactant intactId="EBI-996616">
        <id>P02795</id>
    </interactant>
    <interactant intactId="EBI-6398041">
        <id>Q9UMF0</id>
        <label>ICAM5</label>
    </interactant>
    <organismsDiffer>false</organismsDiffer>
    <experiments>3</experiments>
</comment>
<comment type="interaction">
    <interactant intactId="EBI-996616">
        <id>P02795</id>
    </interactant>
    <interactant intactId="EBI-948266">
        <id>O14901</id>
        <label>KLF11</label>
    </interactant>
    <organismsDiffer>false</organismsDiffer>
    <experiments>3</experiments>
</comment>
<comment type="interaction">
    <interactant intactId="EBI-996616">
        <id>P02795</id>
    </interactant>
    <interactant intactId="EBI-1050743">
        <id>P31153</id>
        <label>MAT2A</label>
    </interactant>
    <organismsDiffer>false</organismsDiffer>
    <experiments>3</experiments>
</comment>
<comment type="interaction">
    <interactant intactId="EBI-996616">
        <id>P02795</id>
    </interactant>
    <interactant intactId="EBI-2811583">
        <id>Q9BVL2</id>
        <label>NUP58</label>
    </interactant>
    <organismsDiffer>false</organismsDiffer>
    <experiments>3</experiments>
</comment>
<comment type="interaction">
    <interactant intactId="EBI-996616">
        <id>P02795</id>
    </interactant>
    <interactant intactId="EBI-50433196">
        <id>A0A6Q8PF08</id>
        <label>PMP22</label>
    </interactant>
    <organismsDiffer>false</organismsDiffer>
    <experiments>3</experiments>
</comment>
<comment type="interaction">
    <interactant intactId="EBI-996616">
        <id>P02795</id>
    </interactant>
    <interactant intactId="EBI-1181072">
        <id>Q15139</id>
        <label>PRKD1</label>
    </interactant>
    <organismsDiffer>false</organismsDiffer>
    <experiments>7</experiments>
</comment>
<comment type="interaction">
    <interactant intactId="EBI-996616">
        <id>P02795</id>
    </interactant>
    <interactant intactId="EBI-985879">
        <id>P37840</id>
        <label>SNCA</label>
    </interactant>
    <organismsDiffer>false</organismsDiffer>
    <experiments>3</experiments>
</comment>
<comment type="interaction">
    <interactant intactId="EBI-996616">
        <id>P02795</id>
    </interactant>
    <interactant intactId="EBI-372475">
        <id>P14678-2</id>
        <label>SNRPB</label>
    </interactant>
    <organismsDiffer>false</organismsDiffer>
    <experiments>3</experiments>
</comment>
<comment type="interaction">
    <interactant intactId="EBI-996616">
        <id>P02795</id>
    </interactant>
    <interactant intactId="EBI-1182445">
        <id>P58062</id>
        <label>SPINK7</label>
    </interactant>
    <organismsDiffer>false</organismsDiffer>
    <experiments>7</experiments>
</comment>
<comment type="domain">
    <text evidence="2">Class I metallothioneins contain 2 metal-binding domains: four divalent ions are chelated within cluster A of the alpha domain and are coordinated via cysteinyl thiolate bridges to 11 cysteine ligands. Cluster B, the corresponding region within the beta domain, can ligate three divalent ions to 9 cysteines.</text>
</comment>
<comment type="miscellaneous">
    <text>This metallothionein binds zinc.</text>
</comment>
<comment type="similarity">
    <text evidence="4">Belongs to the metallothionein superfamily. Type 1 family.</text>
</comment>
<protein>
    <recommendedName>
        <fullName>Metallothionein-2</fullName>
        <shortName>MT-2</shortName>
    </recommendedName>
    <alternativeName>
        <fullName>Metallothionein-2A</fullName>
    </alternativeName>
    <alternativeName>
        <fullName>Metallothionein-II</fullName>
        <shortName>MT-II</shortName>
    </alternativeName>
</protein>
<keyword id="KW-0002">3D-structure</keyword>
<keyword id="KW-0007">Acetylation</keyword>
<keyword id="KW-0104">Cadmium</keyword>
<keyword id="KW-0903">Direct protein sequencing</keyword>
<keyword id="KW-0479">Metal-binding</keyword>
<keyword id="KW-0480">Metal-thiolate cluster</keyword>
<keyword id="KW-0597">Phosphoprotein</keyword>
<keyword id="KW-1267">Proteomics identification</keyword>
<keyword id="KW-1185">Reference proteome</keyword>
<keyword id="KW-0862">Zinc</keyword>
<accession>P02795</accession>
<accession>Q14823</accession>
<accession>Q2HXR9</accession>
<accession>Q53XT9</accession>
<gene>
    <name evidence="5" type="primary">MT2A</name>
    <name type="synonym">CES1</name>
    <name type="synonym">MT2</name>
</gene>
<evidence type="ECO:0000269" key="1">
    <source>
    </source>
</evidence>
<evidence type="ECO:0000269" key="2">
    <source>
    </source>
</evidence>
<evidence type="ECO:0000269" key="3">
    <source ref="8"/>
</evidence>
<evidence type="ECO:0000305" key="4"/>
<evidence type="ECO:0000312" key="5">
    <source>
        <dbReference type="HGNC" id="HGNC:7406"/>
    </source>
</evidence>
<evidence type="ECO:0007744" key="6">
    <source>
        <dbReference type="PDB" id="1MHU"/>
    </source>
</evidence>
<evidence type="ECO:0007744" key="7">
    <source>
        <dbReference type="PDB" id="2MHU"/>
    </source>
</evidence>
<evidence type="ECO:0007744" key="8">
    <source>
    </source>
</evidence>
<evidence type="ECO:0007744" key="9">
    <source>
    </source>
</evidence>
<evidence type="ECO:0007829" key="10">
    <source>
        <dbReference type="PDB" id="1MHU"/>
    </source>
</evidence>
<evidence type="ECO:0007829" key="11">
    <source>
        <dbReference type="PDB" id="2MHU"/>
    </source>
</evidence>
<reference key="1">
    <citation type="journal article" date="1977" name="FEBS Lett.">
        <title>Primary structure of human hepatic metallothionein.</title>
        <authorList>
            <person name="Kissling M.M."/>
            <person name="Kaegi J.H.R."/>
        </authorList>
    </citation>
    <scope>PRELIMINARY PROTEIN SEQUENCE</scope>
    <source>
        <tissue>Liver</tissue>
    </source>
</reference>
<reference key="2">
    <citation type="journal article" date="1982" name="Nature">
        <title>Human metallothionein genes -- primary structure of the metallothionein-II gene and a related processed gene.</title>
        <authorList>
            <person name="Karin M."/>
            <person name="Richards R.I."/>
        </authorList>
    </citation>
    <scope>NUCLEOTIDE SEQUENCE [GENOMIC DNA]</scope>
</reference>
<reference key="3">
    <citation type="journal article" date="1982" name="Nucleic Acids Res.">
        <title>Human metallothionein genes: molecular cloning and sequence analysis of the mRNA.</title>
        <authorList>
            <person name="Karin M."/>
            <person name="Richards R.I."/>
        </authorList>
    </citation>
    <scope>NUCLEOTIDE SEQUENCE [MRNA]</scope>
</reference>
<reference key="4">
    <citation type="journal article" date="1989" name="Proc. Natl. Acad. Sci. U.S.A.">
        <title>Changes in brain gene expression shared by scrapie and Alzheimer disease.</title>
        <authorList>
            <person name="Duguid J.R."/>
            <person name="Bohmont C.W."/>
            <person name="Liu N.G."/>
            <person name="Tourtellotte W.W."/>
        </authorList>
    </citation>
    <scope>NUCLEOTIDE SEQUENCE [MRNA]</scope>
</reference>
<reference key="5">
    <citation type="journal article" date="1992" name="Biochem. Int.">
        <title>Expression of human metallothionein-II fusion protein in Escherichia coli.</title>
        <authorList>
            <person name="Yamazaki S."/>
            <person name="Nakanishi M."/>
            <person name="Hamamoto T."/>
            <person name="Hirata H."/>
            <person name="Ebihara A."/>
            <person name="Tokue A."/>
            <person name="Kagawa Y."/>
        </authorList>
    </citation>
    <scope>NUCLEOTIDE SEQUENCE [MRNA]</scope>
</reference>
<reference key="6">
    <citation type="submission" date="1996-08" db="EMBL/GenBank/DDBJ databases">
        <title>Cloning and sequencing a novel metallothionein 1 isoform expressed in human reticulocytes.</title>
        <authorList>
            <person name="Lambert E."/>
            <person name="Kille P."/>
            <person name="Kay J."/>
            <person name="Swaminathan R."/>
        </authorList>
    </citation>
    <scope>NUCLEOTIDE SEQUENCE [MRNA]</scope>
</reference>
<reference key="7">
    <citation type="submission" date="2003-05" db="EMBL/GenBank/DDBJ databases">
        <title>Cloning of human full-length CDSs in BD Creator(TM) system donor vector.</title>
        <authorList>
            <person name="Kalnine N."/>
            <person name="Chen X."/>
            <person name="Rolfs A."/>
            <person name="Halleck A."/>
            <person name="Hines L."/>
            <person name="Eisenstein S."/>
            <person name="Koundinya M."/>
            <person name="Raphael J."/>
            <person name="Moreira D."/>
            <person name="Kelley T."/>
            <person name="LaBaer J."/>
            <person name="Lin Y."/>
            <person name="Phelan M."/>
            <person name="Farmer A."/>
        </authorList>
    </citation>
    <scope>NUCLEOTIDE SEQUENCE [LARGE SCALE MRNA]</scope>
</reference>
<reference key="8">
    <citation type="submission" date="2006-01" db="EMBL/GenBank/DDBJ databases">
        <authorList>
            <consortium name="NIEHS SNPs program"/>
        </authorList>
    </citation>
    <scope>NUCLEOTIDE SEQUENCE [GENOMIC DNA]</scope>
    <scope>VARIANT VAL-42</scope>
</reference>
<reference key="9">
    <citation type="journal article" date="2004" name="Genome Res.">
        <title>The status, quality, and expansion of the NIH full-length cDNA project: the Mammalian Gene Collection (MGC).</title>
        <authorList>
            <consortium name="The MGC Project Team"/>
        </authorList>
    </citation>
    <scope>NUCLEOTIDE SEQUENCE [LARGE SCALE MRNA]</scope>
    <source>
        <tissue>Brain</tissue>
        <tissue>Kidney</tissue>
    </source>
</reference>
<reference key="10">
    <citation type="journal article" date="2004" name="Biochem. Biophys. Res. Commun.">
        <title>Identification and characterization of a novel gene EOLA1 stimulating ECV304 cell proliferation.</title>
        <authorList>
            <person name="Liang Z."/>
            <person name="Yang Z."/>
        </authorList>
    </citation>
    <scope>INTERACTION WITH EOLA1</scope>
</reference>
<reference key="11">
    <citation type="journal article" date="2009" name="Anal. Chem.">
        <title>Lys-N and trypsin cover complementary parts of the phosphoproteome in a refined SCX-based approach.</title>
        <authorList>
            <person name="Gauci S."/>
            <person name="Helbig A.O."/>
            <person name="Slijper M."/>
            <person name="Krijgsveld J."/>
            <person name="Heck A.J."/>
            <person name="Mohammed S."/>
        </authorList>
    </citation>
    <scope>ACETYLATION [LARGE SCALE ANALYSIS] AT MET-1</scope>
    <scope>IDENTIFICATION BY MASS SPECTROMETRY [LARGE SCALE ANALYSIS]</scope>
</reference>
<reference key="12">
    <citation type="journal article" date="2014" name="J. Proteomics">
        <title>An enzyme assisted RP-RPLC approach for in-depth analysis of human liver phosphoproteome.</title>
        <authorList>
            <person name="Bian Y."/>
            <person name="Song C."/>
            <person name="Cheng K."/>
            <person name="Dong M."/>
            <person name="Wang F."/>
            <person name="Huang J."/>
            <person name="Sun D."/>
            <person name="Wang L."/>
            <person name="Ye M."/>
            <person name="Zou H."/>
        </authorList>
    </citation>
    <scope>PHOSPHORYLATION [LARGE SCALE ANALYSIS] AT SER-58</scope>
    <scope>IDENTIFICATION BY MASS SPECTROMETRY [LARGE SCALE ANALYSIS]</scope>
    <source>
        <tissue>Liver</tissue>
    </source>
</reference>
<reference evidence="6 7" key="13">
    <citation type="journal article" date="1990" name="J. Mol. Biol.">
        <title>Three-dimensional structure of human [113Cd7]metallothionein-2 in solution determined by nuclear magnetic resonance spectroscopy.</title>
        <authorList>
            <person name="Messerle B.A."/>
            <person name="Schaeffer A."/>
            <person name="Vasak M."/>
            <person name="Kaegi J.H.R."/>
            <person name="Wuethrich K."/>
        </authorList>
    </citation>
    <scope>STRUCTURE BY NMR IN COMPLEX WITH CADMIUM IONS</scope>
    <scope>DOMAIN</scope>
</reference>
<reference key="14">
    <citation type="journal article" date="1992" name="J. Mol. Biol.">
        <title>Comparison of the solution conformations of human [Zn7]-metallothionein-2 and [Cd7]-metallothionein-2 using nuclear magnetic resonance spectroscopy.</title>
        <authorList>
            <person name="Messerle B.A."/>
            <person name="Schaeffer A."/>
            <person name="Vasak M."/>
            <person name="Kaegi J.H.R."/>
            <person name="Wuethrich K."/>
        </authorList>
    </citation>
    <scope>STRUCTURE BY NMR IN COMPLEX WITH ZINC IONS</scope>
</reference>
<sequence length="61" mass="6042">MDPNCSCAAGDSCTCAGSCKCKECKCTSCKKSCCSCCPVGCAKCAQGCICKGASDKCSCCA</sequence>
<feature type="chain" id="PRO_0000197245" description="Metallothionein-2">
    <location>
        <begin position="1"/>
        <end position="61"/>
    </location>
</feature>
<feature type="region of interest" description="Beta">
    <location>
        <begin position="1"/>
        <end position="29"/>
    </location>
</feature>
<feature type="region of interest" description="Alpha">
    <location>
        <begin position="30"/>
        <end position="61"/>
    </location>
</feature>
<feature type="binding site" evidence="2 7">
    <location>
        <position position="5"/>
    </location>
    <ligand>
        <name>a divalent metal cation</name>
        <dbReference type="ChEBI" id="CHEBI:60240"/>
        <label>1</label>
        <note>in cluster B</note>
    </ligand>
</feature>
<feature type="binding site" evidence="2 7">
    <location>
        <position position="7"/>
    </location>
    <ligand>
        <name>a divalent metal cation</name>
        <dbReference type="ChEBI" id="CHEBI:60240"/>
        <label>1</label>
        <note>in cluster B</note>
    </ligand>
</feature>
<feature type="binding site" evidence="2 7">
    <location>
        <position position="7"/>
    </location>
    <ligand>
        <name>a divalent metal cation</name>
        <dbReference type="ChEBI" id="CHEBI:60240"/>
        <label>2</label>
        <note>in cluster B</note>
    </ligand>
</feature>
<feature type="binding site" evidence="2 7">
    <location>
        <position position="13"/>
    </location>
    <ligand>
        <name>a divalent metal cation</name>
        <dbReference type="ChEBI" id="CHEBI:60240"/>
        <label>2</label>
        <note>in cluster B</note>
    </ligand>
</feature>
<feature type="binding site" evidence="2 7">
    <location>
        <position position="15"/>
    </location>
    <ligand>
        <name>a divalent metal cation</name>
        <dbReference type="ChEBI" id="CHEBI:60240"/>
        <label>2</label>
        <note>in cluster B</note>
    </ligand>
</feature>
<feature type="binding site" evidence="2 7">
    <location>
        <position position="15"/>
    </location>
    <ligand>
        <name>a divalent metal cation</name>
        <dbReference type="ChEBI" id="CHEBI:60240"/>
        <label>3</label>
        <note>in cluster B</note>
    </ligand>
</feature>
<feature type="binding site" evidence="2 7">
    <location>
        <position position="19"/>
    </location>
    <ligand>
        <name>a divalent metal cation</name>
        <dbReference type="ChEBI" id="CHEBI:60240"/>
        <label>3</label>
        <note>in cluster B</note>
    </ligand>
</feature>
<feature type="binding site" evidence="2 7">
    <location>
        <position position="21"/>
    </location>
    <ligand>
        <name>a divalent metal cation</name>
        <dbReference type="ChEBI" id="CHEBI:60240"/>
        <label>1</label>
        <note>in cluster B</note>
    </ligand>
</feature>
<feature type="binding site" evidence="2 7">
    <location>
        <position position="24"/>
    </location>
    <ligand>
        <name>a divalent metal cation</name>
        <dbReference type="ChEBI" id="CHEBI:60240"/>
        <label>1</label>
        <note>in cluster B</note>
    </ligand>
</feature>
<feature type="binding site" evidence="2 7">
    <location>
        <position position="24"/>
    </location>
    <ligand>
        <name>a divalent metal cation</name>
        <dbReference type="ChEBI" id="CHEBI:60240"/>
        <label>3</label>
        <note>in cluster B</note>
    </ligand>
</feature>
<feature type="binding site" evidence="2 7">
    <location>
        <position position="26"/>
    </location>
    <ligand>
        <name>a divalent metal cation</name>
        <dbReference type="ChEBI" id="CHEBI:60240"/>
        <label>2</label>
        <note>in cluster B</note>
    </ligand>
</feature>
<feature type="binding site" evidence="2 7">
    <location>
        <position position="29"/>
    </location>
    <ligand>
        <name>a divalent metal cation</name>
        <dbReference type="ChEBI" id="CHEBI:60240"/>
        <label>3</label>
        <note>in cluster B</note>
    </ligand>
</feature>
<feature type="binding site" evidence="2 6">
    <location>
        <position position="33"/>
    </location>
    <ligand>
        <name>a divalent metal cation</name>
        <dbReference type="ChEBI" id="CHEBI:60240"/>
        <label>4</label>
        <note>in cluster A</note>
    </ligand>
</feature>
<feature type="binding site" evidence="2 6">
    <location>
        <position position="34"/>
    </location>
    <ligand>
        <name>a divalent metal cation</name>
        <dbReference type="ChEBI" id="CHEBI:60240"/>
        <label>4</label>
        <note>in cluster A</note>
    </ligand>
</feature>
<feature type="binding site" evidence="2 6">
    <location>
        <position position="34"/>
    </location>
    <ligand>
        <name>a divalent metal cation</name>
        <dbReference type="ChEBI" id="CHEBI:60240"/>
        <label>5</label>
        <note>in cluster A</note>
    </ligand>
</feature>
<feature type="binding site" evidence="2 6">
    <location>
        <position position="36"/>
    </location>
    <ligand>
        <name>a divalent metal cation</name>
        <dbReference type="ChEBI" id="CHEBI:60240"/>
        <label>5</label>
        <note>in cluster A</note>
    </ligand>
</feature>
<feature type="binding site" evidence="2 6">
    <location>
        <position position="37"/>
    </location>
    <ligand>
        <name>a divalent metal cation</name>
        <dbReference type="ChEBI" id="CHEBI:60240"/>
        <label>5</label>
        <note>in cluster A</note>
    </ligand>
</feature>
<feature type="binding site" evidence="2 6">
    <location>
        <position position="37"/>
    </location>
    <ligand>
        <name>a divalent metal cation</name>
        <dbReference type="ChEBI" id="CHEBI:60240"/>
        <label>6</label>
        <note>in cluster A</note>
    </ligand>
</feature>
<feature type="binding site" evidence="2 6">
    <location>
        <position position="41"/>
    </location>
    <ligand>
        <name>a divalent metal cation</name>
        <dbReference type="ChEBI" id="CHEBI:60240"/>
        <label>6</label>
        <note>in cluster A</note>
    </ligand>
</feature>
<feature type="binding site" evidence="2 6">
    <location>
        <position position="44"/>
    </location>
    <ligand>
        <name>a divalent metal cation</name>
        <dbReference type="ChEBI" id="CHEBI:60240"/>
        <label>4</label>
        <note>in cluster A</note>
    </ligand>
</feature>
<feature type="binding site" evidence="2 6">
    <location>
        <position position="44"/>
    </location>
    <ligand>
        <name>a divalent metal cation</name>
        <dbReference type="ChEBI" id="CHEBI:60240"/>
        <label>6</label>
        <note>in cluster A</note>
    </ligand>
</feature>
<feature type="binding site" evidence="2 6">
    <location>
        <position position="48"/>
    </location>
    <ligand>
        <name>a divalent metal cation</name>
        <dbReference type="ChEBI" id="CHEBI:60240"/>
        <label>4</label>
        <note>in cluster A</note>
    </ligand>
</feature>
<feature type="binding site" evidence="2 6">
    <location>
        <position position="50"/>
    </location>
    <ligand>
        <name>a divalent metal cation</name>
        <dbReference type="ChEBI" id="CHEBI:60240"/>
        <label>5</label>
        <note>in cluster A</note>
    </ligand>
</feature>
<feature type="binding site" evidence="2 6">
    <location>
        <position position="50"/>
    </location>
    <ligand>
        <name>a divalent metal cation</name>
        <dbReference type="ChEBI" id="CHEBI:60240"/>
        <label>7</label>
        <note>in cluster A</note>
    </ligand>
</feature>
<feature type="binding site" evidence="2 6">
    <location>
        <position position="57"/>
    </location>
    <ligand>
        <name>a divalent metal cation</name>
        <dbReference type="ChEBI" id="CHEBI:60240"/>
        <label>7</label>
        <note>in cluster A</note>
    </ligand>
</feature>
<feature type="binding site" evidence="2 6">
    <location>
        <position position="59"/>
    </location>
    <ligand>
        <name>a divalent metal cation</name>
        <dbReference type="ChEBI" id="CHEBI:60240"/>
        <label>7</label>
        <note>in cluster A</note>
    </ligand>
</feature>
<feature type="binding site" evidence="2 6">
    <location>
        <position position="60"/>
    </location>
    <ligand>
        <name>a divalent metal cation</name>
        <dbReference type="ChEBI" id="CHEBI:60240"/>
        <label>6</label>
        <note>in cluster A</note>
    </ligand>
</feature>
<feature type="binding site" evidence="2 6">
    <location>
        <position position="60"/>
    </location>
    <ligand>
        <name>a divalent metal cation</name>
        <dbReference type="ChEBI" id="CHEBI:60240"/>
        <label>7</label>
        <note>in cluster A</note>
    </ligand>
</feature>
<feature type="modified residue" description="N-acetylmethionine" evidence="8">
    <location>
        <position position="1"/>
    </location>
</feature>
<feature type="modified residue" description="Phosphoserine" evidence="9">
    <location>
        <position position="58"/>
    </location>
</feature>
<feature type="sequence variant" id="VAR_025840" description="In dbSNP:rs35109646." evidence="3">
    <original>A</original>
    <variation>V</variation>
    <location>
        <position position="42"/>
    </location>
</feature>
<feature type="strand" evidence="11">
    <location>
        <begin position="7"/>
        <end position="11"/>
    </location>
</feature>
<feature type="helix" evidence="11">
    <location>
        <begin position="27"/>
        <end position="29"/>
    </location>
</feature>
<feature type="strand" evidence="10">
    <location>
        <begin position="35"/>
        <end position="37"/>
    </location>
</feature>
<feature type="helix" evidence="10">
    <location>
        <begin position="42"/>
        <end position="44"/>
    </location>
</feature>
<proteinExistence type="evidence at protein level"/>
<organism>
    <name type="scientific">Homo sapiens</name>
    <name type="common">Human</name>
    <dbReference type="NCBI Taxonomy" id="9606"/>
    <lineage>
        <taxon>Eukaryota</taxon>
        <taxon>Metazoa</taxon>
        <taxon>Chordata</taxon>
        <taxon>Craniata</taxon>
        <taxon>Vertebrata</taxon>
        <taxon>Euteleostomi</taxon>
        <taxon>Mammalia</taxon>
        <taxon>Eutheria</taxon>
        <taxon>Euarchontoglires</taxon>
        <taxon>Primates</taxon>
        <taxon>Haplorrhini</taxon>
        <taxon>Catarrhini</taxon>
        <taxon>Hominidae</taxon>
        <taxon>Homo</taxon>
    </lineage>
</organism>